<proteinExistence type="inferred from homology"/>
<gene>
    <name evidence="1" type="primary">rhlB</name>
    <name type="ordered locus">XCV3954</name>
</gene>
<name>RHLB_XANE5</name>
<organism>
    <name type="scientific">Xanthomonas euvesicatoria pv. vesicatoria (strain 85-10)</name>
    <name type="common">Xanthomonas campestris pv. vesicatoria</name>
    <dbReference type="NCBI Taxonomy" id="316273"/>
    <lineage>
        <taxon>Bacteria</taxon>
        <taxon>Pseudomonadati</taxon>
        <taxon>Pseudomonadota</taxon>
        <taxon>Gammaproteobacteria</taxon>
        <taxon>Lysobacterales</taxon>
        <taxon>Lysobacteraceae</taxon>
        <taxon>Xanthomonas</taxon>
    </lineage>
</organism>
<feature type="chain" id="PRO_1000082878" description="ATP-dependent RNA helicase RhlB">
    <location>
        <begin position="1"/>
        <end position="573"/>
    </location>
</feature>
<feature type="domain" description="Helicase ATP-binding" evidence="1">
    <location>
        <begin position="40"/>
        <end position="220"/>
    </location>
</feature>
<feature type="domain" description="Helicase C-terminal" evidence="1">
    <location>
        <begin position="231"/>
        <end position="393"/>
    </location>
</feature>
<feature type="region of interest" description="Disordered" evidence="2">
    <location>
        <begin position="391"/>
        <end position="560"/>
    </location>
</feature>
<feature type="short sequence motif" description="Q motif">
    <location>
        <begin position="9"/>
        <end position="37"/>
    </location>
</feature>
<feature type="short sequence motif" description="DEAD box">
    <location>
        <begin position="166"/>
        <end position="169"/>
    </location>
</feature>
<feature type="compositionally biased region" description="Acidic residues" evidence="2">
    <location>
        <begin position="402"/>
        <end position="411"/>
    </location>
</feature>
<feature type="compositionally biased region" description="Basic and acidic residues" evidence="2">
    <location>
        <begin position="419"/>
        <end position="432"/>
    </location>
</feature>
<feature type="compositionally biased region" description="Gly residues" evidence="2">
    <location>
        <begin position="435"/>
        <end position="450"/>
    </location>
</feature>
<feature type="compositionally biased region" description="Basic and acidic residues" evidence="2">
    <location>
        <begin position="451"/>
        <end position="462"/>
    </location>
</feature>
<feature type="compositionally biased region" description="Low complexity" evidence="2">
    <location>
        <begin position="484"/>
        <end position="499"/>
    </location>
</feature>
<feature type="compositionally biased region" description="Basic residues" evidence="2">
    <location>
        <begin position="505"/>
        <end position="514"/>
    </location>
</feature>
<feature type="compositionally biased region" description="Low complexity" evidence="2">
    <location>
        <begin position="541"/>
        <end position="560"/>
    </location>
</feature>
<feature type="binding site" evidence="1">
    <location>
        <begin position="53"/>
        <end position="60"/>
    </location>
    <ligand>
        <name>ATP</name>
        <dbReference type="ChEBI" id="CHEBI:30616"/>
    </ligand>
</feature>
<sequence length="573" mass="62199">MSDKPLTDVTFSSFDLHPALIAGLESAGFTRCTPIQALTLPVALPGGDVAGQAQTGTGKTLAFLVAVMNRLLIRPALADRKPEDPRALILAPTRELAIQIHKDAVKFGADLGLRFALVYGGVDYDKQRELLQQGVDVIIATPGRLIDYVKQHKVVSLHACEICVLDEADRMFDLGFIKDIRFLLRRMPERGTRQTLLFSATLSHRVLELAYEHMNEPEKLVVETESITAARVRQRIYFPSDEEKQTLLLGLLSRSEGARTMVFVNTKAFVERVARTLERHGYRVGVLSGDVPQKKRESLLNRFQKGQLEILVATDVAARGLHIDGVKYVYNYDLPFDAEDYVHRIGRTARLGEEGDAISFACERYAMSLPDIEAYIEQKIPVEPVTSELLTPLPRAPRVPVEGEEADDDAGDSVGTIFREAREQRAAEEQRRGGGRSGSGGSRSGSGGGGGRREGAGADGKPRPRRKPRVEGQAPATAASTEHPVVAAAAGQAPSAGVADAERAPRKRRRRRNGRPVEGAEPAVASTPVPAPAAPRKPTQVVAKPVRAAAKPSGSPSLLSRIGRRLRSLVSGN</sequence>
<reference key="1">
    <citation type="journal article" date="2005" name="J. Bacteriol.">
        <title>Insights into genome plasticity and pathogenicity of the plant pathogenic Bacterium Xanthomonas campestris pv. vesicatoria revealed by the complete genome sequence.</title>
        <authorList>
            <person name="Thieme F."/>
            <person name="Koebnik R."/>
            <person name="Bekel T."/>
            <person name="Berger C."/>
            <person name="Boch J."/>
            <person name="Buettner D."/>
            <person name="Caldana C."/>
            <person name="Gaigalat L."/>
            <person name="Goesmann A."/>
            <person name="Kay S."/>
            <person name="Kirchner O."/>
            <person name="Lanz C."/>
            <person name="Linke B."/>
            <person name="McHardy A.C."/>
            <person name="Meyer F."/>
            <person name="Mittenhuber G."/>
            <person name="Nies D.H."/>
            <person name="Niesbach-Kloesgen U."/>
            <person name="Patschkowski T."/>
            <person name="Rueckert C."/>
            <person name="Rupp O."/>
            <person name="Schneiker S."/>
            <person name="Schuster S.C."/>
            <person name="Vorhoelter F.J."/>
            <person name="Weber E."/>
            <person name="Puehler A."/>
            <person name="Bonas U."/>
            <person name="Bartels D."/>
            <person name="Kaiser O."/>
        </authorList>
    </citation>
    <scope>NUCLEOTIDE SEQUENCE [LARGE SCALE GENOMIC DNA]</scope>
    <source>
        <strain>85-10</strain>
    </source>
</reference>
<protein>
    <recommendedName>
        <fullName evidence="1">ATP-dependent RNA helicase RhlB</fullName>
        <ecNumber evidence="1">3.6.4.13</ecNumber>
    </recommendedName>
</protein>
<accession>Q3BNH8</accession>
<keyword id="KW-0067">ATP-binding</keyword>
<keyword id="KW-0963">Cytoplasm</keyword>
<keyword id="KW-0347">Helicase</keyword>
<keyword id="KW-0378">Hydrolase</keyword>
<keyword id="KW-0547">Nucleotide-binding</keyword>
<keyword id="KW-0694">RNA-binding</keyword>
<evidence type="ECO:0000255" key="1">
    <source>
        <dbReference type="HAMAP-Rule" id="MF_00661"/>
    </source>
</evidence>
<evidence type="ECO:0000256" key="2">
    <source>
        <dbReference type="SAM" id="MobiDB-lite"/>
    </source>
</evidence>
<dbReference type="EC" id="3.6.4.13" evidence="1"/>
<dbReference type="EMBL" id="AM039952">
    <property type="protein sequence ID" value="CAJ25685.1"/>
    <property type="molecule type" value="Genomic_DNA"/>
</dbReference>
<dbReference type="RefSeq" id="WP_011348805.1">
    <property type="nucleotide sequence ID" value="NZ_CP017190.1"/>
</dbReference>
<dbReference type="SMR" id="Q3BNH8"/>
<dbReference type="STRING" id="456327.BJD11_02865"/>
<dbReference type="KEGG" id="xcv:XCV3954"/>
<dbReference type="eggNOG" id="COG0513">
    <property type="taxonomic scope" value="Bacteria"/>
</dbReference>
<dbReference type="HOGENOM" id="CLU_003041_28_4_6"/>
<dbReference type="Proteomes" id="UP000007069">
    <property type="component" value="Chromosome"/>
</dbReference>
<dbReference type="GO" id="GO:0005829">
    <property type="term" value="C:cytosol"/>
    <property type="evidence" value="ECO:0007669"/>
    <property type="project" value="TreeGrafter"/>
</dbReference>
<dbReference type="GO" id="GO:0005524">
    <property type="term" value="F:ATP binding"/>
    <property type="evidence" value="ECO:0007669"/>
    <property type="project" value="UniProtKB-UniRule"/>
</dbReference>
<dbReference type="GO" id="GO:0016887">
    <property type="term" value="F:ATP hydrolysis activity"/>
    <property type="evidence" value="ECO:0007669"/>
    <property type="project" value="RHEA"/>
</dbReference>
<dbReference type="GO" id="GO:0003723">
    <property type="term" value="F:RNA binding"/>
    <property type="evidence" value="ECO:0007669"/>
    <property type="project" value="UniProtKB-UniRule"/>
</dbReference>
<dbReference type="GO" id="GO:0003724">
    <property type="term" value="F:RNA helicase activity"/>
    <property type="evidence" value="ECO:0007669"/>
    <property type="project" value="UniProtKB-UniRule"/>
</dbReference>
<dbReference type="GO" id="GO:0006401">
    <property type="term" value="P:RNA catabolic process"/>
    <property type="evidence" value="ECO:0007669"/>
    <property type="project" value="UniProtKB-UniRule"/>
</dbReference>
<dbReference type="CDD" id="cd00268">
    <property type="entry name" value="DEADc"/>
    <property type="match status" value="1"/>
</dbReference>
<dbReference type="CDD" id="cd18787">
    <property type="entry name" value="SF2_C_DEAD"/>
    <property type="match status" value="1"/>
</dbReference>
<dbReference type="Gene3D" id="3.40.50.300">
    <property type="entry name" value="P-loop containing nucleotide triphosphate hydrolases"/>
    <property type="match status" value="2"/>
</dbReference>
<dbReference type="HAMAP" id="MF_00661">
    <property type="entry name" value="DEAD_helicase_RhlB"/>
    <property type="match status" value="1"/>
</dbReference>
<dbReference type="InterPro" id="IPR011545">
    <property type="entry name" value="DEAD/DEAH_box_helicase_dom"/>
</dbReference>
<dbReference type="InterPro" id="IPR050079">
    <property type="entry name" value="DEAD_box_RNA_helicase"/>
</dbReference>
<dbReference type="InterPro" id="IPR014001">
    <property type="entry name" value="Helicase_ATP-bd"/>
</dbReference>
<dbReference type="InterPro" id="IPR001650">
    <property type="entry name" value="Helicase_C-like"/>
</dbReference>
<dbReference type="InterPro" id="IPR027417">
    <property type="entry name" value="P-loop_NTPase"/>
</dbReference>
<dbReference type="InterPro" id="IPR022077">
    <property type="entry name" value="RhlB"/>
</dbReference>
<dbReference type="InterPro" id="IPR000629">
    <property type="entry name" value="RNA-helicase_DEAD-box_CS"/>
</dbReference>
<dbReference type="InterPro" id="IPR023554">
    <property type="entry name" value="RNA_helicase_ATP-dep_RhlB"/>
</dbReference>
<dbReference type="InterPro" id="IPR014014">
    <property type="entry name" value="RNA_helicase_DEAD_Q_motif"/>
</dbReference>
<dbReference type="NCBIfam" id="NF003390">
    <property type="entry name" value="PRK04537.1"/>
    <property type="match status" value="1"/>
</dbReference>
<dbReference type="PANTHER" id="PTHR47959:SF10">
    <property type="entry name" value="ATP-DEPENDENT RNA HELICASE RHLB"/>
    <property type="match status" value="1"/>
</dbReference>
<dbReference type="PANTHER" id="PTHR47959">
    <property type="entry name" value="ATP-DEPENDENT RNA HELICASE RHLE-RELATED"/>
    <property type="match status" value="1"/>
</dbReference>
<dbReference type="Pfam" id="PF00270">
    <property type="entry name" value="DEAD"/>
    <property type="match status" value="1"/>
</dbReference>
<dbReference type="Pfam" id="PF00271">
    <property type="entry name" value="Helicase_C"/>
    <property type="match status" value="1"/>
</dbReference>
<dbReference type="Pfam" id="PF12300">
    <property type="entry name" value="RhlB"/>
    <property type="match status" value="1"/>
</dbReference>
<dbReference type="SMART" id="SM00487">
    <property type="entry name" value="DEXDc"/>
    <property type="match status" value="1"/>
</dbReference>
<dbReference type="SMART" id="SM00490">
    <property type="entry name" value="HELICc"/>
    <property type="match status" value="1"/>
</dbReference>
<dbReference type="SUPFAM" id="SSF52540">
    <property type="entry name" value="P-loop containing nucleoside triphosphate hydrolases"/>
    <property type="match status" value="1"/>
</dbReference>
<dbReference type="PROSITE" id="PS00039">
    <property type="entry name" value="DEAD_ATP_HELICASE"/>
    <property type="match status" value="1"/>
</dbReference>
<dbReference type="PROSITE" id="PS51192">
    <property type="entry name" value="HELICASE_ATP_BIND_1"/>
    <property type="match status" value="1"/>
</dbReference>
<dbReference type="PROSITE" id="PS51194">
    <property type="entry name" value="HELICASE_CTER"/>
    <property type="match status" value="1"/>
</dbReference>
<dbReference type="PROSITE" id="PS51195">
    <property type="entry name" value="Q_MOTIF"/>
    <property type="match status" value="1"/>
</dbReference>
<comment type="function">
    <text evidence="1">DEAD-box RNA helicase involved in RNA degradation. Has RNA-dependent ATPase activity and unwinds double-stranded RNA.</text>
</comment>
<comment type="catalytic activity">
    <reaction evidence="1">
        <text>ATP + H2O = ADP + phosphate + H(+)</text>
        <dbReference type="Rhea" id="RHEA:13065"/>
        <dbReference type="ChEBI" id="CHEBI:15377"/>
        <dbReference type="ChEBI" id="CHEBI:15378"/>
        <dbReference type="ChEBI" id="CHEBI:30616"/>
        <dbReference type="ChEBI" id="CHEBI:43474"/>
        <dbReference type="ChEBI" id="CHEBI:456216"/>
        <dbReference type="EC" id="3.6.4.13"/>
    </reaction>
</comment>
<comment type="subunit">
    <text evidence="1">Component of the RNA degradosome, which is a multiprotein complex involved in RNA processing and mRNA degradation.</text>
</comment>
<comment type="subcellular location">
    <subcellularLocation>
        <location evidence="1">Cytoplasm</location>
    </subcellularLocation>
</comment>
<comment type="similarity">
    <text evidence="1">Belongs to the DEAD box helicase family. RhlB subfamily.</text>
</comment>